<reference key="1">
    <citation type="journal article" date="2006" name="Proc. Natl. Acad. Sci. U.S.A.">
        <title>Molecular genetic anatomy of inter- and intraserotype variation in the human bacterial pathogen group A Streptococcus.</title>
        <authorList>
            <person name="Beres S.B."/>
            <person name="Richter E.W."/>
            <person name="Nagiec M.J."/>
            <person name="Sumby P."/>
            <person name="Porcella S.F."/>
            <person name="DeLeo F.R."/>
            <person name="Musser J.M."/>
        </authorList>
    </citation>
    <scope>NUCLEOTIDE SEQUENCE [LARGE SCALE GENOMIC DNA]</scope>
    <source>
        <strain>MGAS2096</strain>
    </source>
</reference>
<sequence length="238" mass="26924">MEEAKIPMLKLGPITFNLTLLAVCIVTIAVIFAFVFWASRQMKLKPEGKQTALEYLISFVDGIGEEHLDHNLQKSYSLLLFTIFLFVAVANNLGLFTKLETVNGYNLWTSPTANLAFDLALSLFITLMVHIEGVRRRGLVAHLKRLATPWPMTPMNLLEEFTNFLSLAIRLFGNIFAGEVVTGLIVQLANYRVYWWPIAFLVNMAWTAFSVFISCIQAFVFTKLTATYLGKKVNESEE</sequence>
<gene>
    <name evidence="1" type="primary">atpB</name>
    <name type="ordered locus">MGAS2096_Spy0638</name>
</gene>
<protein>
    <recommendedName>
        <fullName evidence="1">ATP synthase subunit a</fullName>
    </recommendedName>
    <alternativeName>
        <fullName evidence="1">ATP synthase F0 sector subunit a</fullName>
    </alternativeName>
    <alternativeName>
        <fullName evidence="1">F-ATPase subunit 6</fullName>
    </alternativeName>
</protein>
<organism>
    <name type="scientific">Streptococcus pyogenes serotype M12 (strain MGAS2096)</name>
    <dbReference type="NCBI Taxonomy" id="370553"/>
    <lineage>
        <taxon>Bacteria</taxon>
        <taxon>Bacillati</taxon>
        <taxon>Bacillota</taxon>
        <taxon>Bacilli</taxon>
        <taxon>Lactobacillales</taxon>
        <taxon>Streptococcaceae</taxon>
        <taxon>Streptococcus</taxon>
    </lineage>
</organism>
<proteinExistence type="inferred from homology"/>
<feature type="chain" id="PRO_1000145330" description="ATP synthase subunit a">
    <location>
        <begin position="1"/>
        <end position="238"/>
    </location>
</feature>
<feature type="transmembrane region" description="Helical" evidence="1">
    <location>
        <begin position="18"/>
        <end position="38"/>
    </location>
</feature>
<feature type="transmembrane region" description="Helical" evidence="1">
    <location>
        <begin position="76"/>
        <end position="96"/>
    </location>
</feature>
<feature type="transmembrane region" description="Helical" evidence="1">
    <location>
        <begin position="114"/>
        <end position="134"/>
    </location>
</feature>
<feature type="transmembrane region" description="Helical" evidence="1">
    <location>
        <begin position="166"/>
        <end position="186"/>
    </location>
</feature>
<feature type="transmembrane region" description="Helical" evidence="1">
    <location>
        <begin position="193"/>
        <end position="213"/>
    </location>
</feature>
<comment type="function">
    <text evidence="1">Key component of the proton channel; it plays a direct role in the translocation of protons across the membrane.</text>
</comment>
<comment type="subunit">
    <text evidence="1">F-type ATPases have 2 components, CF(1) - the catalytic core - and CF(0) - the membrane proton channel. CF(1) has five subunits: alpha(3), beta(3), gamma(1), delta(1), epsilon(1). CF(0) has three main subunits: a(1), b(2) and c(9-12). The alpha and beta chains form an alternating ring which encloses part of the gamma chain. CF(1) is attached to CF(0) by a central stalk formed by the gamma and epsilon chains, while a peripheral stalk is formed by the delta and b chains.</text>
</comment>
<comment type="subcellular location">
    <subcellularLocation>
        <location evidence="1">Cell membrane</location>
        <topology evidence="1">Multi-pass membrane protein</topology>
    </subcellularLocation>
</comment>
<comment type="similarity">
    <text evidence="1">Belongs to the ATPase A chain family.</text>
</comment>
<dbReference type="EMBL" id="CP000261">
    <property type="protein sequence ID" value="ABF35690.1"/>
    <property type="molecule type" value="Genomic_DNA"/>
</dbReference>
<dbReference type="SMR" id="Q1JCL8"/>
<dbReference type="KEGG" id="spj:MGAS2096_Spy0638"/>
<dbReference type="HOGENOM" id="CLU_041018_2_3_9"/>
<dbReference type="GO" id="GO:0005886">
    <property type="term" value="C:plasma membrane"/>
    <property type="evidence" value="ECO:0007669"/>
    <property type="project" value="UniProtKB-SubCell"/>
</dbReference>
<dbReference type="GO" id="GO:0045259">
    <property type="term" value="C:proton-transporting ATP synthase complex"/>
    <property type="evidence" value="ECO:0007669"/>
    <property type="project" value="UniProtKB-KW"/>
</dbReference>
<dbReference type="GO" id="GO:0046933">
    <property type="term" value="F:proton-transporting ATP synthase activity, rotational mechanism"/>
    <property type="evidence" value="ECO:0007669"/>
    <property type="project" value="UniProtKB-UniRule"/>
</dbReference>
<dbReference type="GO" id="GO:0042777">
    <property type="term" value="P:proton motive force-driven plasma membrane ATP synthesis"/>
    <property type="evidence" value="ECO:0007669"/>
    <property type="project" value="TreeGrafter"/>
</dbReference>
<dbReference type="CDD" id="cd00310">
    <property type="entry name" value="ATP-synt_Fo_a_6"/>
    <property type="match status" value="1"/>
</dbReference>
<dbReference type="Gene3D" id="1.20.120.220">
    <property type="entry name" value="ATP synthase, F0 complex, subunit A"/>
    <property type="match status" value="1"/>
</dbReference>
<dbReference type="HAMAP" id="MF_01393">
    <property type="entry name" value="ATP_synth_a_bact"/>
    <property type="match status" value="1"/>
</dbReference>
<dbReference type="InterPro" id="IPR045082">
    <property type="entry name" value="ATP_syn_F0_a_bact/chloroplast"/>
</dbReference>
<dbReference type="InterPro" id="IPR000568">
    <property type="entry name" value="ATP_synth_F0_asu"/>
</dbReference>
<dbReference type="InterPro" id="IPR023011">
    <property type="entry name" value="ATP_synth_F0_asu_AS"/>
</dbReference>
<dbReference type="InterPro" id="IPR035908">
    <property type="entry name" value="F0_ATP_A_sf"/>
</dbReference>
<dbReference type="NCBIfam" id="TIGR01131">
    <property type="entry name" value="ATP_synt_6_or_A"/>
    <property type="match status" value="1"/>
</dbReference>
<dbReference type="NCBIfam" id="NF004479">
    <property type="entry name" value="PRK05815.1-4"/>
    <property type="match status" value="1"/>
</dbReference>
<dbReference type="PANTHER" id="PTHR42823">
    <property type="entry name" value="ATP SYNTHASE SUBUNIT A, CHLOROPLASTIC"/>
    <property type="match status" value="1"/>
</dbReference>
<dbReference type="PANTHER" id="PTHR42823:SF3">
    <property type="entry name" value="ATP SYNTHASE SUBUNIT A, CHLOROPLASTIC"/>
    <property type="match status" value="1"/>
</dbReference>
<dbReference type="Pfam" id="PF00119">
    <property type="entry name" value="ATP-synt_A"/>
    <property type="match status" value="1"/>
</dbReference>
<dbReference type="PRINTS" id="PR00123">
    <property type="entry name" value="ATPASEA"/>
</dbReference>
<dbReference type="SUPFAM" id="SSF81336">
    <property type="entry name" value="F1F0 ATP synthase subunit A"/>
    <property type="match status" value="1"/>
</dbReference>
<dbReference type="PROSITE" id="PS00449">
    <property type="entry name" value="ATPASE_A"/>
    <property type="match status" value="1"/>
</dbReference>
<accession>Q1JCL8</accession>
<name>ATP6_STRPB</name>
<keyword id="KW-0066">ATP synthesis</keyword>
<keyword id="KW-1003">Cell membrane</keyword>
<keyword id="KW-0138">CF(0)</keyword>
<keyword id="KW-0375">Hydrogen ion transport</keyword>
<keyword id="KW-0406">Ion transport</keyword>
<keyword id="KW-0472">Membrane</keyword>
<keyword id="KW-0812">Transmembrane</keyword>
<keyword id="KW-1133">Transmembrane helix</keyword>
<keyword id="KW-0813">Transport</keyword>
<evidence type="ECO:0000255" key="1">
    <source>
        <dbReference type="HAMAP-Rule" id="MF_01393"/>
    </source>
</evidence>